<name>UP03_GINBI</name>
<keyword id="KW-0903">Direct protein sequencing</keyword>
<organism>
    <name type="scientific">Ginkgo biloba</name>
    <name type="common">Ginkgo</name>
    <name type="synonym">Maidenhair tree</name>
    <dbReference type="NCBI Taxonomy" id="3311"/>
    <lineage>
        <taxon>Eukaryota</taxon>
        <taxon>Viridiplantae</taxon>
        <taxon>Streptophyta</taxon>
        <taxon>Embryophyta</taxon>
        <taxon>Tracheophyta</taxon>
        <taxon>Spermatophyta</taxon>
        <taxon>Ginkgoidae</taxon>
        <taxon>Ginkgoales</taxon>
        <taxon>Ginkgoaceae</taxon>
        <taxon>Ginkgo</taxon>
    </lineage>
</organism>
<reference key="1">
    <citation type="journal article" date="2009" name="Physiol. Plantarum">
        <title>The presence of sinapyl lignin in Ginkgo biloba cell cultures changes our views of the evolution of lignin biosynthesis.</title>
        <authorList>
            <person name="Novo Uzal E."/>
            <person name="Gomez Ros L.V."/>
            <person name="Pomar F."/>
            <person name="Bernal M.A."/>
            <person name="Paradela A."/>
            <person name="Albar J.P."/>
            <person name="Ros Barcelo A."/>
        </authorList>
    </citation>
    <scope>PROTEIN SEQUENCE</scope>
    <source>
        <strain>PC-650</strain>
        <tissue>Callus</tissue>
    </source>
</reference>
<feature type="chain" id="PRO_0000318128" description="Unknown protein 3">
    <location>
        <begin position="1" status="less than"/>
        <end position="10" status="greater than"/>
    </location>
</feature>
<feature type="unsure residue" description="L or I">
    <location>
        <position position="1"/>
    </location>
</feature>
<feature type="unsure residue" description="L or I">
    <location>
        <position position="2"/>
    </location>
</feature>
<feature type="unsure residue" description="L or I">
    <location>
        <position position="3"/>
    </location>
</feature>
<feature type="non-terminal residue">
    <location>
        <position position="1"/>
    </location>
</feature>
<feature type="non-terminal residue">
    <location>
        <position position="10"/>
    </location>
</feature>
<sequence>LLLDPXXGDK</sequence>
<proteinExistence type="evidence at protein level"/>
<accession>P85427</accession>
<protein>
    <recommendedName>
        <fullName>Unknown protein 3</fullName>
    </recommendedName>
</protein>